<dbReference type="EMBL" id="AJ223184">
    <property type="protein sequence ID" value="CAA11156.1"/>
    <property type="molecule type" value="mRNA"/>
</dbReference>
<dbReference type="RefSeq" id="NP_598226.1">
    <property type="nucleotide sequence ID" value="NM_133542.2"/>
</dbReference>
<dbReference type="SMR" id="Q9Z0K5"/>
<dbReference type="FunCoup" id="Q9Z0K5">
    <property type="interactions" value="454"/>
</dbReference>
<dbReference type="STRING" id="10116.ENSRNOP00000023262"/>
<dbReference type="PhosphoSitePlus" id="Q9Z0K5"/>
<dbReference type="PaxDb" id="10116-ENSRNOP00000023262"/>
<dbReference type="GeneID" id="171064"/>
<dbReference type="KEGG" id="rno:171064"/>
<dbReference type="UCSC" id="RGD:620663">
    <property type="organism name" value="rat"/>
</dbReference>
<dbReference type="AGR" id="RGD:620663"/>
<dbReference type="CTD" id="10261"/>
<dbReference type="RGD" id="620663">
    <property type="gene designation" value="Igsf6"/>
</dbReference>
<dbReference type="eggNOG" id="ENOG502S4JY">
    <property type="taxonomic scope" value="Eukaryota"/>
</dbReference>
<dbReference type="InParanoid" id="Q9Z0K5"/>
<dbReference type="PhylomeDB" id="Q9Z0K5"/>
<dbReference type="PRO" id="PR:Q9Z0K5"/>
<dbReference type="Proteomes" id="UP000002494">
    <property type="component" value="Unplaced"/>
</dbReference>
<dbReference type="GO" id="GO:0016020">
    <property type="term" value="C:membrane"/>
    <property type="evidence" value="ECO:0007669"/>
    <property type="project" value="UniProtKB-SubCell"/>
</dbReference>
<dbReference type="Gene3D" id="2.60.40.10">
    <property type="entry name" value="Immunoglobulins"/>
    <property type="match status" value="1"/>
</dbReference>
<dbReference type="InterPro" id="IPR007110">
    <property type="entry name" value="Ig-like_dom"/>
</dbReference>
<dbReference type="InterPro" id="IPR036179">
    <property type="entry name" value="Ig-like_dom_sf"/>
</dbReference>
<dbReference type="InterPro" id="IPR013783">
    <property type="entry name" value="Ig-like_fold"/>
</dbReference>
<dbReference type="InterPro" id="IPR003599">
    <property type="entry name" value="Ig_sub"/>
</dbReference>
<dbReference type="InterPro" id="IPR013106">
    <property type="entry name" value="Ig_V-set"/>
</dbReference>
<dbReference type="InterPro" id="IPR039089">
    <property type="entry name" value="IGSF6"/>
</dbReference>
<dbReference type="PANTHER" id="PTHR15297">
    <property type="entry name" value="IMMUNOGLOBULIN SUPERFAMILY MEMBER 6"/>
    <property type="match status" value="1"/>
</dbReference>
<dbReference type="PANTHER" id="PTHR15297:SF2">
    <property type="entry name" value="IMMUNOGLOBULIN SUPERFAMILY MEMBER 6"/>
    <property type="match status" value="1"/>
</dbReference>
<dbReference type="Pfam" id="PF07686">
    <property type="entry name" value="V-set"/>
    <property type="match status" value="1"/>
</dbReference>
<dbReference type="SMART" id="SM00409">
    <property type="entry name" value="IG"/>
    <property type="match status" value="1"/>
</dbReference>
<dbReference type="SMART" id="SM00406">
    <property type="entry name" value="IGv"/>
    <property type="match status" value="1"/>
</dbReference>
<dbReference type="SUPFAM" id="SSF48726">
    <property type="entry name" value="Immunoglobulin"/>
    <property type="match status" value="1"/>
</dbReference>
<dbReference type="PROSITE" id="PS50835">
    <property type="entry name" value="IG_LIKE"/>
    <property type="match status" value="1"/>
</dbReference>
<sequence>MGPVSTSRRGLRLGISLILLQVGVVGACTVSVLQPGYLEVDYTSQTVTMECTFSTTGCPAVQPKSLWFRCGTHQPEALCLDGCRNEADKFTVKETLDQNRVSLTVNRLSPNDSAIYICGIAFPNEPVPTAKQTGDGTTLVVRERLFSREVHSLLIVLLALLAVYVTGVCVIFIVLFRSKSNTPRSRETKEDSKKKSARRIFQEIAQELYHKRYVETSHQPEQDGNYENRKALPSPGRP</sequence>
<name>IGSF6_RAT</name>
<protein>
    <recommendedName>
        <fullName>Immunoglobulin superfamily member 6</fullName>
        <shortName>IgSF6</shortName>
    </recommendedName>
    <alternativeName>
        <fullName>Protein DORA</fullName>
    </alternativeName>
</protein>
<comment type="subcellular location">
    <subcellularLocation>
        <location evidence="4">Membrane</location>
        <topology evidence="4">Single-pass type I membrane protein</topology>
    </subcellularLocation>
</comment>
<comment type="miscellaneous">
    <text>This gene is coded entirely within the intron of Mettl9 which is transcribed in the opposite strand of the DNA.</text>
</comment>
<reference key="1">
    <citation type="journal article" date="1998" name="Mol. Immunol.">
        <title>CD40L activation of dendritic cells down-regulates DORA, a novel member of the immunoglobulin superfamily.</title>
        <authorList>
            <person name="Bates E.E.M."/>
            <person name="Dieu M.-C."/>
            <person name="Ravel O."/>
            <person name="Zurawski S.M."/>
            <person name="Patel S."/>
            <person name="Bridon J.-M."/>
            <person name="Ait-Yahia S."/>
            <person name="Vega F. Jr."/>
            <person name="Banchereau J."/>
            <person name="Lebecque S."/>
        </authorList>
    </citation>
    <scope>NUCLEOTIDE SEQUENCE [MRNA]</scope>
</reference>
<accession>Q9Z0K5</accession>
<evidence type="ECO:0000255" key="1"/>
<evidence type="ECO:0000255" key="2">
    <source>
        <dbReference type="PROSITE-ProRule" id="PRU00114"/>
    </source>
</evidence>
<evidence type="ECO:0000256" key="3">
    <source>
        <dbReference type="SAM" id="MobiDB-lite"/>
    </source>
</evidence>
<evidence type="ECO:0000305" key="4"/>
<organism>
    <name type="scientific">Rattus norvegicus</name>
    <name type="common">Rat</name>
    <dbReference type="NCBI Taxonomy" id="10116"/>
    <lineage>
        <taxon>Eukaryota</taxon>
        <taxon>Metazoa</taxon>
        <taxon>Chordata</taxon>
        <taxon>Craniata</taxon>
        <taxon>Vertebrata</taxon>
        <taxon>Euteleostomi</taxon>
        <taxon>Mammalia</taxon>
        <taxon>Eutheria</taxon>
        <taxon>Euarchontoglires</taxon>
        <taxon>Glires</taxon>
        <taxon>Rodentia</taxon>
        <taxon>Myomorpha</taxon>
        <taxon>Muroidea</taxon>
        <taxon>Muridae</taxon>
        <taxon>Murinae</taxon>
        <taxon>Rattus</taxon>
    </lineage>
</organism>
<keyword id="KW-1015">Disulfide bond</keyword>
<keyword id="KW-0393">Immunoglobulin domain</keyword>
<keyword id="KW-0472">Membrane</keyword>
<keyword id="KW-1185">Reference proteome</keyword>
<keyword id="KW-0732">Signal</keyword>
<keyword id="KW-0812">Transmembrane</keyword>
<keyword id="KW-1133">Transmembrane helix</keyword>
<gene>
    <name type="primary">Igsf6</name>
    <name type="synonym">Dora</name>
</gene>
<feature type="signal peptide" evidence="1">
    <location>
        <begin position="1"/>
        <end position="27"/>
    </location>
</feature>
<feature type="chain" id="PRO_5000065015" description="Immunoglobulin superfamily member 6">
    <location>
        <begin position="28"/>
        <end position="238"/>
    </location>
</feature>
<feature type="topological domain" description="Extracellular" evidence="1">
    <location>
        <begin position="28"/>
        <end position="153"/>
    </location>
</feature>
<feature type="transmembrane region" description="Helical" evidence="1">
    <location>
        <begin position="154"/>
        <end position="174"/>
    </location>
</feature>
<feature type="topological domain" description="Cytoplasmic" evidence="1">
    <location>
        <begin position="175"/>
        <end position="238"/>
    </location>
</feature>
<feature type="domain" description="Ig-like C2-type">
    <location>
        <begin position="30"/>
        <end position="134"/>
    </location>
</feature>
<feature type="region of interest" description="Disordered" evidence="3">
    <location>
        <begin position="215"/>
        <end position="238"/>
    </location>
</feature>
<feature type="compositionally biased region" description="Basic and acidic residues" evidence="3">
    <location>
        <begin position="215"/>
        <end position="230"/>
    </location>
</feature>
<feature type="disulfide bond" evidence="2">
    <location>
        <begin position="51"/>
        <end position="118"/>
    </location>
</feature>
<proteinExistence type="evidence at transcript level"/>